<accession>O67124</accession>
<reference key="1">
    <citation type="journal article" date="1998" name="Nature">
        <title>The complete genome of the hyperthermophilic bacterium Aquifex aeolicus.</title>
        <authorList>
            <person name="Deckert G."/>
            <person name="Warren P.V."/>
            <person name="Gaasterland T."/>
            <person name="Young W.G."/>
            <person name="Lenox A.L."/>
            <person name="Graham D.E."/>
            <person name="Overbeek R."/>
            <person name="Snead M.A."/>
            <person name="Keller M."/>
            <person name="Aujay M."/>
            <person name="Huber R."/>
            <person name="Feldman R.A."/>
            <person name="Short J.M."/>
            <person name="Olsen G.J."/>
            <person name="Swanson R.V."/>
        </authorList>
    </citation>
    <scope>NUCLEOTIDE SEQUENCE [LARGE SCALE GENOMIC DNA]</scope>
    <source>
        <strain>VF5</strain>
    </source>
</reference>
<dbReference type="EMBL" id="AE000657">
    <property type="protein sequence ID" value="AAC07092.1"/>
    <property type="molecule type" value="Genomic_DNA"/>
</dbReference>
<dbReference type="PIR" id="A70387">
    <property type="entry name" value="A70387"/>
</dbReference>
<dbReference type="RefSeq" id="NP_213687.1">
    <property type="nucleotide sequence ID" value="NC_000918.1"/>
</dbReference>
<dbReference type="RefSeq" id="WP_010880625.1">
    <property type="nucleotide sequence ID" value="NC_000918.1"/>
</dbReference>
<dbReference type="SMR" id="O67124"/>
<dbReference type="FunCoup" id="O67124">
    <property type="interactions" value="74"/>
</dbReference>
<dbReference type="STRING" id="224324.aq_1006"/>
<dbReference type="EnsemblBacteria" id="AAC07092">
    <property type="protein sequence ID" value="AAC07092"/>
    <property type="gene ID" value="aq_1006"/>
</dbReference>
<dbReference type="KEGG" id="aae:aq_1006"/>
<dbReference type="PATRIC" id="fig|224324.8.peg.787"/>
<dbReference type="eggNOG" id="COG0419">
    <property type="taxonomic scope" value="Bacteria"/>
</dbReference>
<dbReference type="HOGENOM" id="CLU_004785_1_2_0"/>
<dbReference type="InParanoid" id="O67124"/>
<dbReference type="OrthoDB" id="9795626at2"/>
<dbReference type="Proteomes" id="UP000000798">
    <property type="component" value="Chromosome"/>
</dbReference>
<dbReference type="GO" id="GO:1990391">
    <property type="term" value="C:DNA repair complex"/>
    <property type="evidence" value="ECO:0000318"/>
    <property type="project" value="GO_Central"/>
</dbReference>
<dbReference type="GO" id="GO:0005524">
    <property type="term" value="F:ATP binding"/>
    <property type="evidence" value="ECO:0007669"/>
    <property type="project" value="UniProtKB-KW"/>
</dbReference>
<dbReference type="GO" id="GO:0016887">
    <property type="term" value="F:ATP hydrolysis activity"/>
    <property type="evidence" value="ECO:0007669"/>
    <property type="project" value="InterPro"/>
</dbReference>
<dbReference type="GO" id="GO:0004529">
    <property type="term" value="F:DNA exonuclease activity"/>
    <property type="evidence" value="ECO:0000318"/>
    <property type="project" value="GO_Central"/>
</dbReference>
<dbReference type="GO" id="GO:0046872">
    <property type="term" value="F:metal ion binding"/>
    <property type="evidence" value="ECO:0007669"/>
    <property type="project" value="UniProtKB-KW"/>
</dbReference>
<dbReference type="GO" id="GO:0006281">
    <property type="term" value="P:DNA repair"/>
    <property type="evidence" value="ECO:0000318"/>
    <property type="project" value="GO_Central"/>
</dbReference>
<dbReference type="GO" id="GO:0006302">
    <property type="term" value="P:double-strand break repair"/>
    <property type="evidence" value="ECO:0007669"/>
    <property type="project" value="InterPro"/>
</dbReference>
<dbReference type="CDD" id="cd03279">
    <property type="entry name" value="ABC_sbcCD"/>
    <property type="match status" value="1"/>
</dbReference>
<dbReference type="Gene3D" id="1.10.287.1490">
    <property type="match status" value="1"/>
</dbReference>
<dbReference type="Gene3D" id="3.40.50.300">
    <property type="entry name" value="P-loop containing nucleotide triphosphate hydrolases"/>
    <property type="match status" value="2"/>
</dbReference>
<dbReference type="InterPro" id="IPR027417">
    <property type="entry name" value="P-loop_NTPase"/>
</dbReference>
<dbReference type="InterPro" id="IPR038729">
    <property type="entry name" value="Rad50/SbcC_AAA"/>
</dbReference>
<dbReference type="InterPro" id="IPR004592">
    <property type="entry name" value="SbcC_gammaproteobac_type"/>
</dbReference>
<dbReference type="InterPro" id="IPR013134">
    <property type="entry name" value="Zn_hook_RAD50"/>
</dbReference>
<dbReference type="NCBIfam" id="TIGR00618">
    <property type="entry name" value="sbcc"/>
    <property type="match status" value="1"/>
</dbReference>
<dbReference type="PANTHER" id="PTHR32114">
    <property type="entry name" value="ABC TRANSPORTER ABCH.3"/>
    <property type="match status" value="1"/>
</dbReference>
<dbReference type="PANTHER" id="PTHR32114:SF2">
    <property type="entry name" value="ABC TRANSPORTER ABCH.3"/>
    <property type="match status" value="1"/>
</dbReference>
<dbReference type="Pfam" id="PF13476">
    <property type="entry name" value="AAA_23"/>
    <property type="match status" value="1"/>
</dbReference>
<dbReference type="Pfam" id="PF13558">
    <property type="entry name" value="SbcC_Walker_B"/>
    <property type="match status" value="1"/>
</dbReference>
<dbReference type="SUPFAM" id="SSF52540">
    <property type="entry name" value="P-loop containing nucleoside triphosphate hydrolases"/>
    <property type="match status" value="2"/>
</dbReference>
<dbReference type="PROSITE" id="PS51131">
    <property type="entry name" value="ZN_HOOK"/>
    <property type="match status" value="1"/>
</dbReference>
<name>RAD50_AQUAE</name>
<protein>
    <recommendedName>
        <fullName>Probable DNA double-strand break repair Rad50 ATPase</fullName>
    </recommendedName>
</protein>
<comment type="function">
    <text evidence="1">Involved in DNA double-strand break repair (DSBR). The Rad50/Mre11 complex possesses single-strand endonuclease activity and ATP-dependent double-strand-specific 3'-5' exonuclease activity. Rad50 provides an ATP-dependent control of Mre11 by unwinding and/or repositioning DNA ends into the Mre11 active site (By similarity).</text>
</comment>
<comment type="cofactor">
    <cofactor evidence="1">
        <name>Zn(2+)</name>
        <dbReference type="ChEBI" id="CHEBI:29105"/>
    </cofactor>
    <text evidence="1">Binds 1 zinc ion per homodimer.</text>
</comment>
<comment type="subunit">
    <text evidence="1">Homodimer. Forms a complex with Mre11 (By similarity).</text>
</comment>
<comment type="domain">
    <text evidence="1">The two conserved Cys that bind zinc constitute the zinc-hook, which separates the large intramolecular coiled coil regions. The 2 Cys residues coordinate one molecule of zinc with the help of the 2 Cys residues of the zinc-hook of another Rad50 molecule, thereby forming a V-shaped homodimer (By similarity).</text>
</comment>
<comment type="similarity">
    <text evidence="4">Belongs to the SMC family. RAD50 subfamily.</text>
</comment>
<feature type="chain" id="PRO_0000138669" description="Probable DNA double-strand break repair Rad50 ATPase">
    <location>
        <begin position="1"/>
        <end position="978"/>
    </location>
</feature>
<feature type="domain" description="Zinc-hook" evidence="3">
    <location>
        <begin position="440"/>
        <end position="542"/>
    </location>
</feature>
<feature type="coiled-coil region" evidence="2">
    <location>
        <begin position="160"/>
        <end position="421"/>
    </location>
</feature>
<feature type="coiled-coil region" evidence="2">
    <location>
        <begin position="440"/>
        <end position="478"/>
    </location>
</feature>
<feature type="coiled-coil region" evidence="2">
    <location>
        <begin position="510"/>
        <end position="542"/>
    </location>
</feature>
<feature type="coiled-coil region" evidence="2">
    <location>
        <begin position="578"/>
        <end position="826"/>
    </location>
</feature>
<feature type="binding site" evidence="1">
    <location>
        <begin position="32"/>
        <end position="39"/>
    </location>
    <ligand>
        <name>ATP</name>
        <dbReference type="ChEBI" id="CHEBI:30616"/>
    </ligand>
</feature>
<feature type="binding site" evidence="3">
    <location>
        <position position="486"/>
    </location>
    <ligand>
        <name>Zn(2+)</name>
        <dbReference type="ChEBI" id="CHEBI:29105"/>
    </ligand>
</feature>
<feature type="binding site" evidence="3">
    <location>
        <position position="489"/>
    </location>
    <ligand>
        <name>Zn(2+)</name>
        <dbReference type="ChEBI" id="CHEBI:29105"/>
    </ligand>
</feature>
<organism>
    <name type="scientific">Aquifex aeolicus (strain VF5)</name>
    <dbReference type="NCBI Taxonomy" id="224324"/>
    <lineage>
        <taxon>Bacteria</taxon>
        <taxon>Pseudomonadati</taxon>
        <taxon>Aquificota</taxon>
        <taxon>Aquificia</taxon>
        <taxon>Aquificales</taxon>
        <taxon>Aquificaceae</taxon>
        <taxon>Aquifex</taxon>
    </lineage>
</organism>
<proteinExistence type="inferred from homology"/>
<sequence>MRPLKLEVKGFTVYKKPQVIDFTPLKFFVIQGKTGAGKTSIIDAITYALYGKVPRYGASVATKYVLSRGEKELKVALDFSLRGRNYRVERYYREFPEDSQVRVYEEGRRLNIKANEVEKWLFKISGLDYKTFTKVILLPQGEFDRFLKESSERKKILINLLGLEELEKVRQLASETFKNLEGKREALKKEYELLKDYTPTKKEVLEKTLKNLEEELKELKETEEKLRQELKKAEEKDSLERELSQVVTKLKELENLEKEVEKLREKLEFSRKVAPYVPIAKRIEEIDKKLTELKVRKNKLTKELAVLKDELSFAQEELNRIEAEKEKFKEEKEREKELEHRLKKLQEIKEILKELSQLSSSLKEKEREYEQAKQEFEDLSERVEKGKKLVAETEEKLEKIKELFSEEEYTSLKMKERLLVELQRKLKELKEKEGQLENLTQKYKEKKKVHEKVLNELKELERELKERELHYHAHMVASYLSPGDTCPVCGGIYRGKALENVDAEGISELKHAKELKEKEEREIDTTLKLYAQKINSLKEEMEKLRNEVEELRKEIPENLKERIKKLEELRIEKEKLEHKLNKYRKALEDRQKQKEEAQAKLHKAQTELELLKEKIREKSRLVKEFKELYRVERLEDYEESLKEEINYINSKLQEIEEKEKKLRKHFEELSSRKSKLEGELSALNESINSLEEERKEKLKELANIYEVAKSPREVVELYLGDKEAELERKIKEFEESFQSLKLKKSEIEEKLKEYEGIRELSDIKGEYESVKTQLEEKHKKLGEVKRELEHLGERLKRKEELQKEISELEKKLEVYRVISNDFRGDRFQKYVSEIMLQKVVDRASEYFYKFTGNYFFELERATKGRDKDIVVVESSTSQRRPVSSLSGGETFLASLSFAFAVSDLLSGSANLESLFIDEGFGSLDQDMRERVSEILEAIKTNVNKMIGIVSHIPDFAERFTERIVVEKKGDYSEVRVIY</sequence>
<evidence type="ECO:0000250" key="1"/>
<evidence type="ECO:0000255" key="2"/>
<evidence type="ECO:0000255" key="3">
    <source>
        <dbReference type="PROSITE-ProRule" id="PRU00471"/>
    </source>
</evidence>
<evidence type="ECO:0000305" key="4"/>
<gene>
    <name type="primary">rad50</name>
    <name type="ordered locus">aq_1006</name>
</gene>
<keyword id="KW-0067">ATP-binding</keyword>
<keyword id="KW-0175">Coiled coil</keyword>
<keyword id="KW-0227">DNA damage</keyword>
<keyword id="KW-0234">DNA repair</keyword>
<keyword id="KW-0378">Hydrolase</keyword>
<keyword id="KW-0479">Metal-binding</keyword>
<keyword id="KW-0547">Nucleotide-binding</keyword>
<keyword id="KW-1185">Reference proteome</keyword>
<keyword id="KW-0862">Zinc</keyword>